<comment type="function">
    <text evidence="1">Small subunit of the glutamine-dependent carbamoyl phosphate synthetase (CPSase). CPSase catalyzes the formation of carbamoyl phosphate from the ammonia moiety of glutamine, carbonate, and phosphate donated by ATP, constituting the first step of 2 biosynthetic pathways, one leading to arginine and/or urea and the other to pyrimidine nucleotides. The small subunit (glutamine amidotransferase) binds and cleaves glutamine to supply the large subunit with the substrate ammonia.</text>
</comment>
<comment type="catalytic activity">
    <reaction evidence="1">
        <text>hydrogencarbonate + L-glutamine + 2 ATP + H2O = carbamoyl phosphate + L-glutamate + 2 ADP + phosphate + 2 H(+)</text>
        <dbReference type="Rhea" id="RHEA:18633"/>
        <dbReference type="ChEBI" id="CHEBI:15377"/>
        <dbReference type="ChEBI" id="CHEBI:15378"/>
        <dbReference type="ChEBI" id="CHEBI:17544"/>
        <dbReference type="ChEBI" id="CHEBI:29985"/>
        <dbReference type="ChEBI" id="CHEBI:30616"/>
        <dbReference type="ChEBI" id="CHEBI:43474"/>
        <dbReference type="ChEBI" id="CHEBI:58228"/>
        <dbReference type="ChEBI" id="CHEBI:58359"/>
        <dbReference type="ChEBI" id="CHEBI:456216"/>
        <dbReference type="EC" id="6.3.5.5"/>
    </reaction>
</comment>
<comment type="catalytic activity">
    <molecule>Carbamoyl phosphate synthase small chain</molecule>
    <reaction evidence="1">
        <text>L-glutamine + H2O = L-glutamate + NH4(+)</text>
        <dbReference type="Rhea" id="RHEA:15889"/>
        <dbReference type="ChEBI" id="CHEBI:15377"/>
        <dbReference type="ChEBI" id="CHEBI:28938"/>
        <dbReference type="ChEBI" id="CHEBI:29985"/>
        <dbReference type="ChEBI" id="CHEBI:58359"/>
    </reaction>
</comment>
<comment type="pathway">
    <text evidence="1">Amino-acid biosynthesis; L-arginine biosynthesis; carbamoyl phosphate from bicarbonate: step 1/1.</text>
</comment>
<comment type="pathway">
    <text evidence="1">Pyrimidine metabolism; UMP biosynthesis via de novo pathway; (S)-dihydroorotate from bicarbonate: step 1/3.</text>
</comment>
<comment type="subunit">
    <text evidence="1">Composed of two chains; the small (or glutamine) chain promotes the hydrolysis of glutamine to ammonia, which is used by the large (or ammonia) chain to synthesize carbamoyl phosphate. Tetramer of heterodimers (alpha,beta)4.</text>
</comment>
<comment type="similarity">
    <text evidence="1">Belongs to the CarA family.</text>
</comment>
<name>CARA_PASMU</name>
<dbReference type="EC" id="6.3.5.5" evidence="1"/>
<dbReference type="EMBL" id="AE004439">
    <property type="protein sequence ID" value="AAK03586.1"/>
    <property type="molecule type" value="Genomic_DNA"/>
</dbReference>
<dbReference type="RefSeq" id="WP_005757678.1">
    <property type="nucleotide sequence ID" value="NC_002663.1"/>
</dbReference>
<dbReference type="SMR" id="Q9CKV3"/>
<dbReference type="STRING" id="272843.PM1502"/>
<dbReference type="EnsemblBacteria" id="AAK03586">
    <property type="protein sequence ID" value="AAK03586"/>
    <property type="gene ID" value="PM1502"/>
</dbReference>
<dbReference type="GeneID" id="77206934"/>
<dbReference type="KEGG" id="pmu:PM1502"/>
<dbReference type="PATRIC" id="fig|272843.6.peg.1518"/>
<dbReference type="HOGENOM" id="CLU_035901_2_1_6"/>
<dbReference type="OrthoDB" id="9804328at2"/>
<dbReference type="UniPathway" id="UPA00068">
    <property type="reaction ID" value="UER00171"/>
</dbReference>
<dbReference type="UniPathway" id="UPA00070">
    <property type="reaction ID" value="UER00115"/>
</dbReference>
<dbReference type="Proteomes" id="UP000000809">
    <property type="component" value="Chromosome"/>
</dbReference>
<dbReference type="GO" id="GO:0005524">
    <property type="term" value="F:ATP binding"/>
    <property type="evidence" value="ECO:0007669"/>
    <property type="project" value="UniProtKB-UniRule"/>
</dbReference>
<dbReference type="GO" id="GO:0004088">
    <property type="term" value="F:carbamoyl-phosphate synthase (glutamine-hydrolyzing) activity"/>
    <property type="evidence" value="ECO:0007669"/>
    <property type="project" value="UniProtKB-UniRule"/>
</dbReference>
<dbReference type="GO" id="GO:0004359">
    <property type="term" value="F:glutaminase activity"/>
    <property type="evidence" value="ECO:0007669"/>
    <property type="project" value="RHEA"/>
</dbReference>
<dbReference type="GO" id="GO:0006207">
    <property type="term" value="P:'de novo' pyrimidine nucleobase biosynthetic process"/>
    <property type="evidence" value="ECO:0007669"/>
    <property type="project" value="InterPro"/>
</dbReference>
<dbReference type="GO" id="GO:0044205">
    <property type="term" value="P:'de novo' UMP biosynthetic process"/>
    <property type="evidence" value="ECO:0007669"/>
    <property type="project" value="UniProtKB-UniRule"/>
</dbReference>
<dbReference type="GO" id="GO:0006541">
    <property type="term" value="P:glutamine metabolic process"/>
    <property type="evidence" value="ECO:0007669"/>
    <property type="project" value="InterPro"/>
</dbReference>
<dbReference type="GO" id="GO:0006526">
    <property type="term" value="P:L-arginine biosynthetic process"/>
    <property type="evidence" value="ECO:0007669"/>
    <property type="project" value="UniProtKB-UniRule"/>
</dbReference>
<dbReference type="CDD" id="cd01744">
    <property type="entry name" value="GATase1_CPSase"/>
    <property type="match status" value="1"/>
</dbReference>
<dbReference type="FunFam" id="3.40.50.880:FF:000011">
    <property type="entry name" value="Carbamoyl-phosphate synthase small chain"/>
    <property type="match status" value="1"/>
</dbReference>
<dbReference type="FunFam" id="3.50.30.20:FF:000001">
    <property type="entry name" value="Carbamoyl-phosphate synthase small chain"/>
    <property type="match status" value="1"/>
</dbReference>
<dbReference type="Gene3D" id="3.40.50.880">
    <property type="match status" value="1"/>
</dbReference>
<dbReference type="Gene3D" id="3.50.30.20">
    <property type="entry name" value="Carbamoyl-phosphate synthase small subunit, N-terminal domain"/>
    <property type="match status" value="1"/>
</dbReference>
<dbReference type="HAMAP" id="MF_01209">
    <property type="entry name" value="CPSase_S_chain"/>
    <property type="match status" value="1"/>
</dbReference>
<dbReference type="InterPro" id="IPR050472">
    <property type="entry name" value="Anth_synth/Amidotransfase"/>
</dbReference>
<dbReference type="InterPro" id="IPR006274">
    <property type="entry name" value="CarbamoylP_synth_ssu"/>
</dbReference>
<dbReference type="InterPro" id="IPR002474">
    <property type="entry name" value="CarbamoylP_synth_ssu_N"/>
</dbReference>
<dbReference type="InterPro" id="IPR036480">
    <property type="entry name" value="CarbP_synth_ssu_N_sf"/>
</dbReference>
<dbReference type="InterPro" id="IPR029062">
    <property type="entry name" value="Class_I_gatase-like"/>
</dbReference>
<dbReference type="InterPro" id="IPR035686">
    <property type="entry name" value="CPSase_GATase1"/>
</dbReference>
<dbReference type="InterPro" id="IPR017926">
    <property type="entry name" value="GATASE"/>
</dbReference>
<dbReference type="NCBIfam" id="TIGR01368">
    <property type="entry name" value="CPSaseIIsmall"/>
    <property type="match status" value="1"/>
</dbReference>
<dbReference type="NCBIfam" id="NF009475">
    <property type="entry name" value="PRK12838.1"/>
    <property type="match status" value="1"/>
</dbReference>
<dbReference type="PANTHER" id="PTHR43418:SF7">
    <property type="entry name" value="CARBAMOYL-PHOSPHATE SYNTHASE SMALL CHAIN"/>
    <property type="match status" value="1"/>
</dbReference>
<dbReference type="PANTHER" id="PTHR43418">
    <property type="entry name" value="MULTIFUNCTIONAL TRYPTOPHAN BIOSYNTHESIS PROTEIN-RELATED"/>
    <property type="match status" value="1"/>
</dbReference>
<dbReference type="Pfam" id="PF00988">
    <property type="entry name" value="CPSase_sm_chain"/>
    <property type="match status" value="1"/>
</dbReference>
<dbReference type="Pfam" id="PF00117">
    <property type="entry name" value="GATase"/>
    <property type="match status" value="1"/>
</dbReference>
<dbReference type="PRINTS" id="PR00097">
    <property type="entry name" value="ANTSNTHASEII"/>
</dbReference>
<dbReference type="PRINTS" id="PR00099">
    <property type="entry name" value="CPSGATASE"/>
</dbReference>
<dbReference type="PRINTS" id="PR00096">
    <property type="entry name" value="GATASE"/>
</dbReference>
<dbReference type="SMART" id="SM01097">
    <property type="entry name" value="CPSase_sm_chain"/>
    <property type="match status" value="1"/>
</dbReference>
<dbReference type="SUPFAM" id="SSF52021">
    <property type="entry name" value="Carbamoyl phosphate synthetase, small subunit N-terminal domain"/>
    <property type="match status" value="1"/>
</dbReference>
<dbReference type="SUPFAM" id="SSF52317">
    <property type="entry name" value="Class I glutamine amidotransferase-like"/>
    <property type="match status" value="1"/>
</dbReference>
<dbReference type="PROSITE" id="PS51273">
    <property type="entry name" value="GATASE_TYPE_1"/>
    <property type="match status" value="1"/>
</dbReference>
<gene>
    <name evidence="1" type="primary">carA</name>
    <name type="ordered locus">PM1502</name>
</gene>
<evidence type="ECO:0000255" key="1">
    <source>
        <dbReference type="HAMAP-Rule" id="MF_01209"/>
    </source>
</evidence>
<organism>
    <name type="scientific">Pasteurella multocida (strain Pm70)</name>
    <dbReference type="NCBI Taxonomy" id="272843"/>
    <lineage>
        <taxon>Bacteria</taxon>
        <taxon>Pseudomonadati</taxon>
        <taxon>Pseudomonadota</taxon>
        <taxon>Gammaproteobacteria</taxon>
        <taxon>Pasteurellales</taxon>
        <taxon>Pasteurellaceae</taxon>
        <taxon>Pasteurella</taxon>
    </lineage>
</organism>
<feature type="chain" id="PRO_0000112301" description="Carbamoyl phosphate synthase small chain">
    <location>
        <begin position="1"/>
        <end position="385"/>
    </location>
</feature>
<feature type="domain" description="Glutamine amidotransferase type-1" evidence="1">
    <location>
        <begin position="189"/>
        <end position="376"/>
    </location>
</feature>
<feature type="region of interest" description="CPSase" evidence="1">
    <location>
        <begin position="1"/>
        <end position="185"/>
    </location>
</feature>
<feature type="active site" description="Nucleophile" evidence="1">
    <location>
        <position position="265"/>
    </location>
</feature>
<feature type="active site" evidence="1">
    <location>
        <position position="349"/>
    </location>
</feature>
<feature type="active site" evidence="1">
    <location>
        <position position="351"/>
    </location>
</feature>
<feature type="binding site" evidence="1">
    <location>
        <position position="47"/>
    </location>
    <ligand>
        <name>L-glutamine</name>
        <dbReference type="ChEBI" id="CHEBI:58359"/>
    </ligand>
</feature>
<feature type="binding site" evidence="1">
    <location>
        <position position="237"/>
    </location>
    <ligand>
        <name>L-glutamine</name>
        <dbReference type="ChEBI" id="CHEBI:58359"/>
    </ligand>
</feature>
<feature type="binding site" evidence="1">
    <location>
        <position position="239"/>
    </location>
    <ligand>
        <name>L-glutamine</name>
        <dbReference type="ChEBI" id="CHEBI:58359"/>
    </ligand>
</feature>
<feature type="binding site" evidence="1">
    <location>
        <position position="266"/>
    </location>
    <ligand>
        <name>L-glutamine</name>
        <dbReference type="ChEBI" id="CHEBI:58359"/>
    </ligand>
</feature>
<feature type="binding site" evidence="1">
    <location>
        <position position="269"/>
    </location>
    <ligand>
        <name>L-glutamine</name>
        <dbReference type="ChEBI" id="CHEBI:58359"/>
    </ligand>
</feature>
<feature type="binding site" evidence="1">
    <location>
        <position position="307"/>
    </location>
    <ligand>
        <name>L-glutamine</name>
        <dbReference type="ChEBI" id="CHEBI:58359"/>
    </ligand>
</feature>
<feature type="binding site" evidence="1">
    <location>
        <position position="309"/>
    </location>
    <ligand>
        <name>L-glutamine</name>
        <dbReference type="ChEBI" id="CHEBI:58359"/>
    </ligand>
</feature>
<feature type="binding site" evidence="1">
    <location>
        <position position="310"/>
    </location>
    <ligand>
        <name>L-glutamine</name>
        <dbReference type="ChEBI" id="CHEBI:58359"/>
    </ligand>
</feature>
<keyword id="KW-0028">Amino-acid biosynthesis</keyword>
<keyword id="KW-0055">Arginine biosynthesis</keyword>
<keyword id="KW-0067">ATP-binding</keyword>
<keyword id="KW-0315">Glutamine amidotransferase</keyword>
<keyword id="KW-0436">Ligase</keyword>
<keyword id="KW-0547">Nucleotide-binding</keyword>
<keyword id="KW-0665">Pyrimidine biosynthesis</keyword>
<keyword id="KW-1185">Reference proteome</keyword>
<reference key="1">
    <citation type="journal article" date="2001" name="Proc. Natl. Acad. Sci. U.S.A.">
        <title>Complete genomic sequence of Pasteurella multocida Pm70.</title>
        <authorList>
            <person name="May B.J."/>
            <person name="Zhang Q."/>
            <person name="Li L.L."/>
            <person name="Paustian M.L."/>
            <person name="Whittam T.S."/>
            <person name="Kapur V."/>
        </authorList>
    </citation>
    <scope>NUCLEOTIDE SEQUENCE [LARGE SCALE GENOMIC DNA]</scope>
    <source>
        <strain>Pm70</strain>
    </source>
</reference>
<accession>Q9CKV3</accession>
<protein>
    <recommendedName>
        <fullName evidence="1">Carbamoyl phosphate synthase small chain</fullName>
        <ecNumber evidence="1">6.3.5.5</ecNumber>
    </recommendedName>
    <alternativeName>
        <fullName evidence="1">Carbamoyl phosphate synthetase glutamine chain</fullName>
    </alternativeName>
</protein>
<proteinExistence type="inferred from homology"/>
<sequence length="385" mass="41854">MSEPAILVLADGSVFHGTSIGAKGHTVGEVVFNTAMTGYQEILTDPSYFRQIVTLTYPHIGNTGTNLEDCEANHVYASGLIIRDLPLLHSNFRSSMSLRDYLQTHNVVAIADIDTRRLTRILRDKGAQAGCIMTGEIDEAKALELAKSFGSMAGKDLAQEVSTGEIFTWTSGQWQLGKGFIEQTQAEFNVVAYDFGVKHNILRMLAERGCKITVVPAKTSAEQVLALNPDGIFLSNGPGDPEPCDYAISAIQTLLASKKPIFGICLGHQLLGLAAGGKTKKMAFGHHGANHPVQDLNTQKVFITSQNHGFEVDEASLPSHVRVTHRSLFDNSVQGIELSDQSAFSFQGHPEASPGPNDVAYLFDKFINEMRKANLSQLSTYVAHH</sequence>